<reference key="1">
    <citation type="journal article" date="1988" name="J. Mol. Biol.">
        <title>Evidence for gene conversion between the phosphoglycerate kinase genes of Trypanosoma brucei.</title>
        <authorList>
            <person name="le Blancq S.M."/>
            <person name="Swinkels B.W."/>
            <person name="Gibson W.C."/>
            <person name="Borst P."/>
        </authorList>
    </citation>
    <scope>NUCLEOTIDE SEQUENCE [GENOMIC DNA]</scope>
</reference>
<reference key="2">
    <citation type="journal article" date="1985" name="EMBO J.">
        <title>Topogenesis of microbody enzymes: a sequence comparison of the genes for the glycosomal (microbody) and cytosolic phosphoglycerate kinases of Trypanosoma brucei.</title>
        <authorList>
            <person name="Osinga K.A."/>
            <person name="Swinkels B.W."/>
            <person name="Gibson W.C."/>
            <person name="Borst P."/>
            <person name="Veeneman G.H."/>
            <person name="van Boom J.H."/>
            <person name="Michels P.A.M."/>
            <person name="Opperdoes F.R."/>
        </authorList>
    </citation>
    <scope>NUCLEOTIDE SEQUENCE [GENOMIC DNA]</scope>
</reference>
<organism>
    <name type="scientific">Trypanosoma brucei brucei</name>
    <dbReference type="NCBI Taxonomy" id="5702"/>
    <lineage>
        <taxon>Eukaryota</taxon>
        <taxon>Discoba</taxon>
        <taxon>Euglenozoa</taxon>
        <taxon>Kinetoplastea</taxon>
        <taxon>Metakinetoplastina</taxon>
        <taxon>Trypanosomatida</taxon>
        <taxon>Trypanosomatidae</taxon>
        <taxon>Trypanosoma</taxon>
    </lineage>
</organism>
<proteinExistence type="inferred from homology"/>
<feature type="chain" id="PRO_0000145864" description="Phosphoglycerate kinase, cytosolic">
    <location>
        <begin position="1"/>
        <end position="421"/>
    </location>
</feature>
<feature type="binding site" evidence="1">
    <location>
        <position position="23"/>
    </location>
    <ligand>
        <name>(2R)-3-phosphoglycerate</name>
        <dbReference type="ChEBI" id="CHEBI:58272"/>
    </ligand>
</feature>
<feature type="binding site" evidence="3">
    <location>
        <position position="24"/>
    </location>
    <ligand>
        <name>(2R)-3-phosphoglycerate</name>
        <dbReference type="ChEBI" id="CHEBI:58272"/>
    </ligand>
</feature>
<feature type="binding site" evidence="1">
    <location>
        <position position="25"/>
    </location>
    <ligand>
        <name>(2R)-3-phosphoglycerate</name>
        <dbReference type="ChEBI" id="CHEBI:58272"/>
    </ligand>
</feature>
<feature type="binding site" evidence="3">
    <location>
        <position position="26"/>
    </location>
    <ligand>
        <name>(2R)-3-phosphoglycerate</name>
        <dbReference type="ChEBI" id="CHEBI:58272"/>
    </ligand>
</feature>
<feature type="binding site" evidence="3">
    <location>
        <position position="39"/>
    </location>
    <ligand>
        <name>(2R)-3-phosphoglycerate</name>
        <dbReference type="ChEBI" id="CHEBI:58272"/>
    </ligand>
</feature>
<feature type="binding site" evidence="1">
    <location>
        <position position="61"/>
    </location>
    <ligand>
        <name>(2R)-3-phosphoglycerate</name>
        <dbReference type="ChEBI" id="CHEBI:58272"/>
    </ligand>
</feature>
<feature type="binding site" evidence="3">
    <location>
        <position position="62"/>
    </location>
    <ligand>
        <name>(2R)-3-phosphoglycerate</name>
        <dbReference type="ChEBI" id="CHEBI:58272"/>
    </ligand>
</feature>
<feature type="binding site" evidence="1">
    <location>
        <position position="64"/>
    </location>
    <ligand>
        <name>(2R)-3-phosphoglycerate</name>
        <dbReference type="ChEBI" id="CHEBI:58272"/>
    </ligand>
</feature>
<feature type="binding site" evidence="3">
    <location>
        <position position="65"/>
    </location>
    <ligand>
        <name>(2R)-3-phosphoglycerate</name>
        <dbReference type="ChEBI" id="CHEBI:58272"/>
    </ligand>
</feature>
<feature type="binding site" evidence="3">
    <location>
        <position position="135"/>
    </location>
    <ligand>
        <name>(2R)-3-phosphoglycerate</name>
        <dbReference type="ChEBI" id="CHEBI:58272"/>
    </ligand>
</feature>
<feature type="binding site" evidence="1">
    <location>
        <position position="172"/>
    </location>
    <ligand>
        <name>(2R)-3-phosphoglycerate</name>
        <dbReference type="ChEBI" id="CHEBI:58272"/>
    </ligand>
</feature>
<feature type="binding site" evidence="3">
    <location>
        <position position="173"/>
    </location>
    <ligand>
        <name>(2R)-3-phosphoglycerate</name>
        <dbReference type="ChEBI" id="CHEBI:58272"/>
    </ligand>
</feature>
<feature type="binding site" evidence="1">
    <location>
        <position position="218"/>
    </location>
    <ligand>
        <name>ADP</name>
        <dbReference type="ChEBI" id="CHEBI:456216"/>
    </ligand>
</feature>
<feature type="binding site" evidence="1">
    <location>
        <position position="218"/>
    </location>
    <ligand>
        <name>CDP</name>
        <dbReference type="ChEBI" id="CHEBI:58069"/>
    </ligand>
</feature>
<feature type="binding site" evidence="2">
    <location>
        <position position="219"/>
    </location>
    <ligand>
        <name>ADP</name>
        <dbReference type="ChEBI" id="CHEBI:456216"/>
    </ligand>
</feature>
<feature type="binding site" evidence="3">
    <location>
        <position position="219"/>
    </location>
    <ligand>
        <name>AMP</name>
        <dbReference type="ChEBI" id="CHEBI:456215"/>
    </ligand>
</feature>
<feature type="binding site" evidence="3">
    <location>
        <position position="219"/>
    </location>
    <ligand>
        <name>ATP</name>
        <dbReference type="ChEBI" id="CHEBI:30616"/>
    </ligand>
</feature>
<feature type="binding site" evidence="1">
    <location>
        <position position="219"/>
    </location>
    <ligand>
        <name>Mg(2+)</name>
        <dbReference type="ChEBI" id="CHEBI:18420"/>
    </ligand>
</feature>
<feature type="binding site" evidence="2">
    <location>
        <position position="220"/>
    </location>
    <ligand>
        <name>(2R)-3-phosphoglycerate</name>
        <dbReference type="ChEBI" id="CHEBI:58272"/>
    </ligand>
</feature>
<feature type="binding site" evidence="3">
    <location>
        <position position="220"/>
    </location>
    <ligand>
        <name>AMP</name>
        <dbReference type="ChEBI" id="CHEBI:456215"/>
    </ligand>
</feature>
<feature type="binding site" evidence="1">
    <location>
        <position position="223"/>
    </location>
    <ligand>
        <name>CDP</name>
        <dbReference type="ChEBI" id="CHEBI:58069"/>
    </ligand>
</feature>
<feature type="binding site" evidence="1">
    <location>
        <position position="223"/>
    </location>
    <ligand>
        <name>Mg(2+)</name>
        <dbReference type="ChEBI" id="CHEBI:18420"/>
    </ligand>
</feature>
<feature type="binding site" evidence="2">
    <location>
        <position position="224"/>
    </location>
    <ligand>
        <name>ADP</name>
        <dbReference type="ChEBI" id="CHEBI:456216"/>
    </ligand>
</feature>
<feature type="binding site" evidence="3">
    <location>
        <position position="224"/>
    </location>
    <ligand>
        <name>AMP</name>
        <dbReference type="ChEBI" id="CHEBI:456215"/>
    </ligand>
</feature>
<feature type="binding site" evidence="3">
    <location>
        <position position="224"/>
    </location>
    <ligand>
        <name>ATP</name>
        <dbReference type="ChEBI" id="CHEBI:30616"/>
    </ligand>
</feature>
<feature type="binding site" evidence="1">
    <location>
        <position position="242"/>
    </location>
    <ligand>
        <name>ADP</name>
        <dbReference type="ChEBI" id="CHEBI:456216"/>
    </ligand>
</feature>
<feature type="binding site" evidence="1">
    <location>
        <position position="242"/>
    </location>
    <ligand>
        <name>CDP</name>
        <dbReference type="ChEBI" id="CHEBI:58069"/>
    </ligand>
</feature>
<feature type="binding site" evidence="3">
    <location>
        <position position="243"/>
    </location>
    <ligand>
        <name>AMP</name>
        <dbReference type="ChEBI" id="CHEBI:456215"/>
    </ligand>
</feature>
<feature type="binding site" evidence="3">
    <location>
        <position position="243"/>
    </location>
    <ligand>
        <name>ATP</name>
        <dbReference type="ChEBI" id="CHEBI:30616"/>
    </ligand>
</feature>
<feature type="binding site" evidence="2">
    <location>
        <position position="315"/>
    </location>
    <ligand>
        <name>ADP</name>
        <dbReference type="ChEBI" id="CHEBI:456216"/>
    </ligand>
</feature>
<feature type="binding site" evidence="3">
    <location>
        <position position="315"/>
    </location>
    <ligand>
        <name>AMP</name>
        <dbReference type="ChEBI" id="CHEBI:456215"/>
    </ligand>
</feature>
<feature type="binding site" evidence="3">
    <location>
        <position position="315"/>
    </location>
    <ligand>
        <name>ATP</name>
        <dbReference type="ChEBI" id="CHEBI:30616"/>
    </ligand>
</feature>
<feature type="binding site" evidence="2">
    <location>
        <position position="339"/>
    </location>
    <ligand>
        <name>ADP</name>
        <dbReference type="ChEBI" id="CHEBI:456216"/>
    </ligand>
</feature>
<feature type="binding site" evidence="1">
    <location>
        <position position="340"/>
    </location>
    <ligand>
        <name>CDP</name>
        <dbReference type="ChEBI" id="CHEBI:58069"/>
    </ligand>
</feature>
<feature type="binding site" evidence="1">
    <location>
        <position position="345"/>
    </location>
    <ligand>
        <name>ADP</name>
        <dbReference type="ChEBI" id="CHEBI:456216"/>
    </ligand>
</feature>
<feature type="binding site" evidence="1">
    <location>
        <position position="345"/>
    </location>
    <ligand>
        <name>CDP</name>
        <dbReference type="ChEBI" id="CHEBI:58069"/>
    </ligand>
</feature>
<feature type="binding site" evidence="2">
    <location>
        <position position="346"/>
    </location>
    <ligand>
        <name>ADP</name>
        <dbReference type="ChEBI" id="CHEBI:456216"/>
    </ligand>
</feature>
<feature type="binding site" evidence="3">
    <location>
        <position position="346"/>
    </location>
    <ligand>
        <name>AMP</name>
        <dbReference type="ChEBI" id="CHEBI:456215"/>
    </ligand>
</feature>
<feature type="binding site" evidence="3">
    <location>
        <position position="346"/>
    </location>
    <ligand>
        <name>ATP</name>
        <dbReference type="ChEBI" id="CHEBI:30616"/>
    </ligand>
</feature>
<feature type="binding site" evidence="2">
    <location>
        <position position="378"/>
    </location>
    <ligand>
        <name>ADP</name>
        <dbReference type="ChEBI" id="CHEBI:456216"/>
    </ligand>
</feature>
<feature type="binding site" evidence="3">
    <location>
        <position position="378"/>
    </location>
    <ligand>
        <name>ATP</name>
        <dbReference type="ChEBI" id="CHEBI:30616"/>
    </ligand>
</feature>
<feature type="binding site" evidence="3">
    <location>
        <position position="378"/>
    </location>
    <ligand>
        <name>Mg(2+)</name>
        <dbReference type="ChEBI" id="CHEBI:18420"/>
    </ligand>
</feature>
<feature type="binding site" evidence="2">
    <location>
        <position position="379"/>
    </location>
    <ligand>
        <name>ADP</name>
        <dbReference type="ChEBI" id="CHEBI:456216"/>
    </ligand>
</feature>
<feature type="binding site" evidence="3">
    <location>
        <position position="379"/>
    </location>
    <ligand>
        <name>ATP</name>
        <dbReference type="ChEBI" id="CHEBI:30616"/>
    </ligand>
</feature>
<dbReference type="EC" id="2.7.2.3" evidence="1"/>
<dbReference type="EMBL" id="X03370">
    <property type="protein sequence ID" value="CAA27068.1"/>
    <property type="molecule type" value="Genomic_DNA"/>
</dbReference>
<dbReference type="EMBL" id="X05889">
    <property type="protein sequence ID" value="CAA29317.1"/>
    <property type="molecule type" value="Genomic_DNA"/>
</dbReference>
<dbReference type="PIR" id="A25119">
    <property type="entry name" value="KIUTGC"/>
</dbReference>
<dbReference type="SMR" id="P07377"/>
<dbReference type="BRENDA" id="2.7.2.3">
    <property type="organism ID" value="6520"/>
</dbReference>
<dbReference type="SABIO-RK" id="P07377"/>
<dbReference type="UniPathway" id="UPA00109">
    <property type="reaction ID" value="UER00185"/>
</dbReference>
<dbReference type="GO" id="GO:0005829">
    <property type="term" value="C:cytosol"/>
    <property type="evidence" value="ECO:0007669"/>
    <property type="project" value="TreeGrafter"/>
</dbReference>
<dbReference type="GO" id="GO:0043531">
    <property type="term" value="F:ADP binding"/>
    <property type="evidence" value="ECO:0007669"/>
    <property type="project" value="TreeGrafter"/>
</dbReference>
<dbReference type="GO" id="GO:0005524">
    <property type="term" value="F:ATP binding"/>
    <property type="evidence" value="ECO:0007669"/>
    <property type="project" value="UniProtKB-KW"/>
</dbReference>
<dbReference type="GO" id="GO:0046872">
    <property type="term" value="F:metal ion binding"/>
    <property type="evidence" value="ECO:0007669"/>
    <property type="project" value="UniProtKB-KW"/>
</dbReference>
<dbReference type="GO" id="GO:0004618">
    <property type="term" value="F:phosphoglycerate kinase activity"/>
    <property type="evidence" value="ECO:0007669"/>
    <property type="project" value="UniProtKB-EC"/>
</dbReference>
<dbReference type="GO" id="GO:0006094">
    <property type="term" value="P:gluconeogenesis"/>
    <property type="evidence" value="ECO:0007669"/>
    <property type="project" value="TreeGrafter"/>
</dbReference>
<dbReference type="GO" id="GO:0006096">
    <property type="term" value="P:glycolytic process"/>
    <property type="evidence" value="ECO:0007669"/>
    <property type="project" value="UniProtKB-UniPathway"/>
</dbReference>
<dbReference type="CDD" id="cd00318">
    <property type="entry name" value="Phosphoglycerate_kinase"/>
    <property type="match status" value="1"/>
</dbReference>
<dbReference type="FunFam" id="3.40.50.1260:FF:000007">
    <property type="entry name" value="Phosphoglycerate kinase"/>
    <property type="match status" value="1"/>
</dbReference>
<dbReference type="FunFam" id="3.40.50.1260:FF:000011">
    <property type="entry name" value="Phosphoglycerate kinase"/>
    <property type="match status" value="1"/>
</dbReference>
<dbReference type="Gene3D" id="3.40.50.1260">
    <property type="entry name" value="Phosphoglycerate kinase, N-terminal domain"/>
    <property type="match status" value="2"/>
</dbReference>
<dbReference type="HAMAP" id="MF_00145">
    <property type="entry name" value="Phosphoglyc_kinase"/>
    <property type="match status" value="1"/>
</dbReference>
<dbReference type="InterPro" id="IPR027250">
    <property type="entry name" value="Pgk_euglenozoa"/>
</dbReference>
<dbReference type="InterPro" id="IPR001576">
    <property type="entry name" value="Phosphoglycerate_kinase"/>
</dbReference>
<dbReference type="InterPro" id="IPR015911">
    <property type="entry name" value="Phosphoglycerate_kinase_CS"/>
</dbReference>
<dbReference type="InterPro" id="IPR015824">
    <property type="entry name" value="Phosphoglycerate_kinase_N"/>
</dbReference>
<dbReference type="InterPro" id="IPR036043">
    <property type="entry name" value="Phosphoglycerate_kinase_sf"/>
</dbReference>
<dbReference type="PANTHER" id="PTHR11406">
    <property type="entry name" value="PHOSPHOGLYCERATE KINASE"/>
    <property type="match status" value="1"/>
</dbReference>
<dbReference type="PANTHER" id="PTHR11406:SF23">
    <property type="entry name" value="PHOSPHOGLYCERATE KINASE 1, CHLOROPLASTIC-RELATED"/>
    <property type="match status" value="1"/>
</dbReference>
<dbReference type="Pfam" id="PF00162">
    <property type="entry name" value="PGK"/>
    <property type="match status" value="1"/>
</dbReference>
<dbReference type="PIRSF" id="PIRSF000724">
    <property type="entry name" value="Pgk"/>
    <property type="match status" value="1"/>
</dbReference>
<dbReference type="PIRSF" id="PIRSF500126">
    <property type="entry name" value="Pgk_euglenozoa"/>
    <property type="match status" value="1"/>
</dbReference>
<dbReference type="PRINTS" id="PR00477">
    <property type="entry name" value="PHGLYCKINASE"/>
</dbReference>
<dbReference type="SUPFAM" id="SSF53748">
    <property type="entry name" value="Phosphoglycerate kinase"/>
    <property type="match status" value="1"/>
</dbReference>
<dbReference type="PROSITE" id="PS00111">
    <property type="entry name" value="PGLYCERATE_KINASE"/>
    <property type="match status" value="1"/>
</dbReference>
<protein>
    <recommendedName>
        <fullName>Phosphoglycerate kinase, cytosolic</fullName>
        <ecNumber evidence="1">2.7.2.3</ecNumber>
    </recommendedName>
    <alternativeName>
        <fullName>PGK B allele 2</fullName>
    </alternativeName>
    <alternativeName>
        <fullName>Phosphoglycerate kinase B</fullName>
    </alternativeName>
</protein>
<sequence length="421" mass="45154">MSLKERKSINECDLKGKKVLIRVDFNVPLDDGNITNDYRIRSALPAVQKVLTEGGSCVLMSHLGRPKGVSMAEGKELGSAGGIPGFEQKATLKPVAKALSELLSRPVTFAPDCLNAADVVSKMSPGDVVLLENVRFYKEEGSKKSTEEREAMAKILSSYGDVYISDAFGTAHRDSATMTGIPKILGNGAAGYLMEKEISYFAKVLGNPPRPLVAIVGGAKVSDKIQLLDNMLQRIDYLLIGGAMAYTFLKAQGYSIGISMCEESKLEFARSLLKKAEDRKVQIILPIDHVCHTEFKAVDSPLITEDQNIPEGHMALDIGPKTIEKYVQTIGKCKSAIWNGPMGVFEMVPYSKGTFAIAKAMGRGTHEHGLMSIIGGGDSASAAELSGEAKRMSHVSTGGGASLELLEGKTLPGVTVLDDKE</sequence>
<accession>P07377</accession>
<comment type="catalytic activity">
    <reaction evidence="1">
        <text>(2R)-3-phosphoglycerate + ATP = (2R)-3-phospho-glyceroyl phosphate + ADP</text>
        <dbReference type="Rhea" id="RHEA:14801"/>
        <dbReference type="ChEBI" id="CHEBI:30616"/>
        <dbReference type="ChEBI" id="CHEBI:57604"/>
        <dbReference type="ChEBI" id="CHEBI:58272"/>
        <dbReference type="ChEBI" id="CHEBI:456216"/>
        <dbReference type="EC" id="2.7.2.3"/>
    </reaction>
</comment>
<comment type="cofactor">
    <cofactor evidence="2">
        <name>Mg(2+)</name>
        <dbReference type="ChEBI" id="CHEBI:18420"/>
    </cofactor>
</comment>
<comment type="pathway">
    <text>Carbohydrate degradation; glycolysis; pyruvate from D-glyceraldehyde 3-phosphate: step 2/5.</text>
</comment>
<comment type="subunit">
    <text>Monomer.</text>
</comment>
<comment type="subcellular location">
    <subcellularLocation>
        <location>Cytoplasm</location>
    </subcellularLocation>
</comment>
<comment type="miscellaneous">
    <text>In T.brucei, three genes code for phosphoglycerate kinase isozymes, which are transported to different cell compartments.</text>
</comment>
<comment type="similarity">
    <text evidence="4">Belongs to the phosphoglycerate kinase family.</text>
</comment>
<evidence type="ECO:0000250" key="1">
    <source>
        <dbReference type="UniProtKB" id="P00558"/>
    </source>
</evidence>
<evidence type="ECO:0000250" key="2">
    <source>
        <dbReference type="UniProtKB" id="P07378"/>
    </source>
</evidence>
<evidence type="ECO:0000250" key="3">
    <source>
        <dbReference type="UniProtKB" id="Q7SIB7"/>
    </source>
</evidence>
<evidence type="ECO:0000305" key="4"/>
<keyword id="KW-0067">ATP-binding</keyword>
<keyword id="KW-0963">Cytoplasm</keyword>
<keyword id="KW-0324">Glycolysis</keyword>
<keyword id="KW-0418">Kinase</keyword>
<keyword id="KW-0460">Magnesium</keyword>
<keyword id="KW-0479">Metal-binding</keyword>
<keyword id="KW-0547">Nucleotide-binding</keyword>
<keyword id="KW-0808">Transferase</keyword>
<name>PGKB_TRYBB</name>